<protein>
    <recommendedName>
        <fullName>Putative antiporter subunit mnhC2</fullName>
    </recommendedName>
    <alternativeName>
        <fullName>Mrp complex subunit C2</fullName>
    </alternativeName>
    <alternativeName>
        <fullName>Putative NADH-ubiquinone oxidoreductase subunit mnhC2</fullName>
    </alternativeName>
</protein>
<keyword id="KW-0050">Antiport</keyword>
<keyword id="KW-1003">Cell membrane</keyword>
<keyword id="KW-0406">Ion transport</keyword>
<keyword id="KW-0472">Membrane</keyword>
<keyword id="KW-1185">Reference proteome</keyword>
<keyword id="KW-0812">Transmembrane</keyword>
<keyword id="KW-1133">Transmembrane helix</keyword>
<keyword id="KW-0813">Transport</keyword>
<organism>
    <name type="scientific">Staphylococcus aureus (strain NCTC 8325 / PS 47)</name>
    <dbReference type="NCBI Taxonomy" id="93061"/>
    <lineage>
        <taxon>Bacteria</taxon>
        <taxon>Bacillati</taxon>
        <taxon>Bacillota</taxon>
        <taxon>Bacilli</taxon>
        <taxon>Bacillales</taxon>
        <taxon>Staphylococcaceae</taxon>
        <taxon>Staphylococcus</taxon>
    </lineage>
</organism>
<accession>Q2G213</accession>
<evidence type="ECO:0000250" key="1"/>
<evidence type="ECO:0000255" key="2"/>
<evidence type="ECO:0000305" key="3"/>
<proteinExistence type="inferred from homology"/>
<name>MNHC2_STAA8</name>
<feature type="chain" id="PRO_0000372258" description="Putative antiporter subunit mnhC2">
    <location>
        <begin position="1"/>
        <end position="114"/>
    </location>
</feature>
<feature type="transmembrane region" description="Helical" evidence="2">
    <location>
        <begin position="3"/>
        <end position="23"/>
    </location>
</feature>
<feature type="transmembrane region" description="Helical" evidence="2">
    <location>
        <begin position="28"/>
        <end position="48"/>
    </location>
</feature>
<feature type="transmembrane region" description="Helical" evidence="2">
    <location>
        <begin position="72"/>
        <end position="92"/>
    </location>
</feature>
<dbReference type="EMBL" id="CP000253">
    <property type="protein sequence ID" value="ABD29764.1"/>
    <property type="molecule type" value="Genomic_DNA"/>
</dbReference>
<dbReference type="RefSeq" id="WP_001048985.1">
    <property type="nucleotide sequence ID" value="NZ_LS483365.1"/>
</dbReference>
<dbReference type="RefSeq" id="YP_499189.1">
    <property type="nucleotide sequence ID" value="NC_007795.1"/>
</dbReference>
<dbReference type="SMR" id="Q2G213"/>
<dbReference type="STRING" id="93061.SAOUHSC_00627"/>
<dbReference type="PaxDb" id="1280-SAXN108_0691"/>
<dbReference type="GeneID" id="3920037"/>
<dbReference type="KEGG" id="sao:SAOUHSC_00627"/>
<dbReference type="PATRIC" id="fig|93061.5.peg.563"/>
<dbReference type="eggNOG" id="COG1006">
    <property type="taxonomic scope" value="Bacteria"/>
</dbReference>
<dbReference type="HOGENOM" id="CLU_082058_3_1_9"/>
<dbReference type="OrthoDB" id="9799219at2"/>
<dbReference type="PRO" id="PR:Q2G213"/>
<dbReference type="Proteomes" id="UP000008816">
    <property type="component" value="Chromosome"/>
</dbReference>
<dbReference type="GO" id="GO:0005886">
    <property type="term" value="C:plasma membrane"/>
    <property type="evidence" value="ECO:0007669"/>
    <property type="project" value="UniProtKB-SubCell"/>
</dbReference>
<dbReference type="GO" id="GO:0015385">
    <property type="term" value="F:sodium:proton antiporter activity"/>
    <property type="evidence" value="ECO:0000318"/>
    <property type="project" value="GO_Central"/>
</dbReference>
<dbReference type="GO" id="GO:0035725">
    <property type="term" value="P:sodium ion transmembrane transport"/>
    <property type="evidence" value="ECO:0000318"/>
    <property type="project" value="GO_Central"/>
</dbReference>
<dbReference type="Gene3D" id="1.10.287.3510">
    <property type="match status" value="1"/>
</dbReference>
<dbReference type="InterPro" id="IPR050601">
    <property type="entry name" value="CPA3_antiporter_subunitC"/>
</dbReference>
<dbReference type="InterPro" id="IPR039428">
    <property type="entry name" value="NUOK/Mnh_C1-like"/>
</dbReference>
<dbReference type="NCBIfam" id="NF009303">
    <property type="entry name" value="PRK12660.1"/>
    <property type="match status" value="1"/>
</dbReference>
<dbReference type="PANTHER" id="PTHR34583">
    <property type="entry name" value="ANTIPORTER SUBUNIT MNHC2-RELATED"/>
    <property type="match status" value="1"/>
</dbReference>
<dbReference type="PANTHER" id="PTHR34583:SF2">
    <property type="entry name" value="ANTIPORTER SUBUNIT MNHC2-RELATED"/>
    <property type="match status" value="1"/>
</dbReference>
<dbReference type="Pfam" id="PF00420">
    <property type="entry name" value="Oxidored_q2"/>
    <property type="match status" value="1"/>
</dbReference>
<gene>
    <name type="primary">mnhC2</name>
    <name type="synonym">mrpC2</name>
    <name type="ordered locus">SAOUHSC_00627</name>
</gene>
<sequence>MNLILLLVIGFLVFIGTYMILSINLIRIVIGISIYTHAGNLIIMSMGTYGSSRSEPLITGGNQLFVDPLLQAIVLTAIVIGFGMTAFLLVLVYRTYKVTKEDEIEGLRGEDDAK</sequence>
<comment type="subunit">
    <text evidence="1">May form a heterooligomeric complex that consists of seven subunits: mnhA2, mnhB2, mnhC2, mnhD2, mnhE2, mnhF2 and mnhG2.</text>
</comment>
<comment type="subcellular location">
    <subcellularLocation>
        <location evidence="3">Cell membrane</location>
        <topology evidence="3">Multi-pass membrane protein</topology>
    </subcellularLocation>
</comment>
<comment type="similarity">
    <text evidence="3">Belongs to the CPA3 antiporters (TC 2.A.63) subunit C family.</text>
</comment>
<reference key="1">
    <citation type="book" date="2006" name="Gram positive pathogens, 2nd edition">
        <title>The Staphylococcus aureus NCTC 8325 genome.</title>
        <editorList>
            <person name="Fischetti V."/>
            <person name="Novick R."/>
            <person name="Ferretti J."/>
            <person name="Portnoy D."/>
            <person name="Rood J."/>
        </editorList>
        <authorList>
            <person name="Gillaspy A.F."/>
            <person name="Worrell V."/>
            <person name="Orvis J."/>
            <person name="Roe B.A."/>
            <person name="Dyer D.W."/>
            <person name="Iandolo J.J."/>
        </authorList>
    </citation>
    <scope>NUCLEOTIDE SEQUENCE [LARGE SCALE GENOMIC DNA]</scope>
    <source>
        <strain>NCTC 8325 / PS 47</strain>
    </source>
</reference>